<accession>Q8UB32</accession>
<accession>Q7CRU2</accession>
<name>UGPB_AGRFC</name>
<organism>
    <name type="scientific">Agrobacterium fabrum (strain C58 / ATCC 33970)</name>
    <name type="common">Agrobacterium tumefaciens (strain C58)</name>
    <dbReference type="NCBI Taxonomy" id="176299"/>
    <lineage>
        <taxon>Bacteria</taxon>
        <taxon>Pseudomonadati</taxon>
        <taxon>Pseudomonadota</taxon>
        <taxon>Alphaproteobacteria</taxon>
        <taxon>Hyphomicrobiales</taxon>
        <taxon>Rhizobiaceae</taxon>
        <taxon>Rhizobium/Agrobacterium group</taxon>
        <taxon>Agrobacterium</taxon>
        <taxon>Agrobacterium tumefaciens complex</taxon>
    </lineage>
</organism>
<dbReference type="EMBL" id="AE007870">
    <property type="protein sequence ID" value="AAK90201.1"/>
    <property type="status" value="ALT_INIT"/>
    <property type="molecule type" value="Genomic_DNA"/>
</dbReference>
<dbReference type="PIR" id="AC2948">
    <property type="entry name" value="AC2948"/>
</dbReference>
<dbReference type="PIR" id="G98334">
    <property type="entry name" value="G98334"/>
</dbReference>
<dbReference type="RefSeq" id="NP_357416.1">
    <property type="nucleotide sequence ID" value="NC_003063.2"/>
</dbReference>
<dbReference type="RefSeq" id="WP_006314481.1">
    <property type="nucleotide sequence ID" value="NC_003063.2"/>
</dbReference>
<dbReference type="SMR" id="Q8UB32"/>
<dbReference type="STRING" id="176299.Atu3185"/>
<dbReference type="EnsemblBacteria" id="AAK90201">
    <property type="protein sequence ID" value="AAK90201"/>
    <property type="gene ID" value="Atu3185"/>
</dbReference>
<dbReference type="GeneID" id="1134987"/>
<dbReference type="KEGG" id="atu:Atu3185"/>
<dbReference type="PATRIC" id="fig|176299.10.peg.3030"/>
<dbReference type="eggNOG" id="COG1653">
    <property type="taxonomic scope" value="Bacteria"/>
</dbReference>
<dbReference type="HOGENOM" id="CLU_031285_3_0_5"/>
<dbReference type="OrthoDB" id="9762335at2"/>
<dbReference type="Proteomes" id="UP000000813">
    <property type="component" value="Chromosome linear"/>
</dbReference>
<dbReference type="GO" id="GO:0042597">
    <property type="term" value="C:periplasmic space"/>
    <property type="evidence" value="ECO:0007669"/>
    <property type="project" value="UniProtKB-SubCell"/>
</dbReference>
<dbReference type="CDD" id="cd14748">
    <property type="entry name" value="PBP2_UgpB"/>
    <property type="match status" value="1"/>
</dbReference>
<dbReference type="Gene3D" id="3.40.190.10">
    <property type="entry name" value="Periplasmic binding protein-like II"/>
    <property type="match status" value="2"/>
</dbReference>
<dbReference type="InterPro" id="IPR050490">
    <property type="entry name" value="Bact_solute-bd_prot1"/>
</dbReference>
<dbReference type="InterPro" id="IPR006059">
    <property type="entry name" value="SBP"/>
</dbReference>
<dbReference type="NCBIfam" id="NF008211">
    <property type="entry name" value="PRK10974.1"/>
    <property type="match status" value="1"/>
</dbReference>
<dbReference type="PANTHER" id="PTHR43649">
    <property type="entry name" value="ARABINOSE-BINDING PROTEIN-RELATED"/>
    <property type="match status" value="1"/>
</dbReference>
<dbReference type="PANTHER" id="PTHR43649:SF31">
    <property type="entry name" value="SN-GLYCEROL-3-PHOSPHATE-BINDING PERIPLASMIC PROTEIN UGPB"/>
    <property type="match status" value="1"/>
</dbReference>
<dbReference type="Pfam" id="PF13416">
    <property type="entry name" value="SBP_bac_8"/>
    <property type="match status" value="1"/>
</dbReference>
<dbReference type="SUPFAM" id="SSF53850">
    <property type="entry name" value="Periplasmic binding protein-like II"/>
    <property type="match status" value="1"/>
</dbReference>
<protein>
    <recommendedName>
        <fullName evidence="1">sn-glycerol-3-phosphate-binding periplasmic protein UgpB</fullName>
    </recommendedName>
</protein>
<proteinExistence type="inferred from homology"/>
<reference key="1">
    <citation type="journal article" date="2001" name="Science">
        <title>The genome of the natural genetic engineer Agrobacterium tumefaciens C58.</title>
        <authorList>
            <person name="Wood D.W."/>
            <person name="Setubal J.C."/>
            <person name="Kaul R."/>
            <person name="Monks D.E."/>
            <person name="Kitajima J.P."/>
            <person name="Okura V.K."/>
            <person name="Zhou Y."/>
            <person name="Chen L."/>
            <person name="Wood G.E."/>
            <person name="Almeida N.F. Jr."/>
            <person name="Woo L."/>
            <person name="Chen Y."/>
            <person name="Paulsen I.T."/>
            <person name="Eisen J.A."/>
            <person name="Karp P.D."/>
            <person name="Bovee D. Sr."/>
            <person name="Chapman P."/>
            <person name="Clendenning J."/>
            <person name="Deatherage G."/>
            <person name="Gillet W."/>
            <person name="Grant C."/>
            <person name="Kutyavin T."/>
            <person name="Levy R."/>
            <person name="Li M.-J."/>
            <person name="McClelland E."/>
            <person name="Palmieri A."/>
            <person name="Raymond C."/>
            <person name="Rouse G."/>
            <person name="Saenphimmachak C."/>
            <person name="Wu Z."/>
            <person name="Romero P."/>
            <person name="Gordon D."/>
            <person name="Zhang S."/>
            <person name="Yoo H."/>
            <person name="Tao Y."/>
            <person name="Biddle P."/>
            <person name="Jung M."/>
            <person name="Krespan W."/>
            <person name="Perry M."/>
            <person name="Gordon-Kamm B."/>
            <person name="Liao L."/>
            <person name="Kim S."/>
            <person name="Hendrick C."/>
            <person name="Zhao Z.-Y."/>
            <person name="Dolan M."/>
            <person name="Chumley F."/>
            <person name="Tingey S.V."/>
            <person name="Tomb J.-F."/>
            <person name="Gordon M.P."/>
            <person name="Olson M.V."/>
            <person name="Nester E.W."/>
        </authorList>
    </citation>
    <scope>NUCLEOTIDE SEQUENCE [LARGE SCALE GENOMIC DNA]</scope>
    <source>
        <strain>C58 / ATCC 33970</strain>
    </source>
</reference>
<reference key="2">
    <citation type="journal article" date="2001" name="Science">
        <title>Genome sequence of the plant pathogen and biotechnology agent Agrobacterium tumefaciens C58.</title>
        <authorList>
            <person name="Goodner B."/>
            <person name="Hinkle G."/>
            <person name="Gattung S."/>
            <person name="Miller N."/>
            <person name="Blanchard M."/>
            <person name="Qurollo B."/>
            <person name="Goldman B.S."/>
            <person name="Cao Y."/>
            <person name="Askenazi M."/>
            <person name="Halling C."/>
            <person name="Mullin L."/>
            <person name="Houmiel K."/>
            <person name="Gordon J."/>
            <person name="Vaudin M."/>
            <person name="Iartchouk O."/>
            <person name="Epp A."/>
            <person name="Liu F."/>
            <person name="Wollam C."/>
            <person name="Allinger M."/>
            <person name="Doughty D."/>
            <person name="Scott C."/>
            <person name="Lappas C."/>
            <person name="Markelz B."/>
            <person name="Flanagan C."/>
            <person name="Crowell C."/>
            <person name="Gurson J."/>
            <person name="Lomo C."/>
            <person name="Sear C."/>
            <person name="Strub G."/>
            <person name="Cielo C."/>
            <person name="Slater S."/>
        </authorList>
    </citation>
    <scope>NUCLEOTIDE SEQUENCE [LARGE SCALE GENOMIC DNA]</scope>
    <source>
        <strain>C58 / ATCC 33970</strain>
    </source>
</reference>
<evidence type="ECO:0000250" key="1">
    <source>
        <dbReference type="UniProtKB" id="P0AG80"/>
    </source>
</evidence>
<evidence type="ECO:0000255" key="2"/>
<evidence type="ECO:0000305" key="3"/>
<sequence length="436" mass="47261">MTLKKLSYRLAAASALSFFVTSNAFAATEIQWWHAMTGANNEVVDTLAKEFNDSQKDYKITPVFKGTYPETLNAGIAAFRAKQPPAIIQVFDAGSGVMMGAAGAIKPVADVLKEGGYTFNKDEYLAGIVAYYSKPDGTMLSFPYNSSSPILYYNKDIFQKAGLDAANPPKTWPEVFEAAKKIKTSGAAQCGFTSTWLTWIQTENFAAWNNVSYGSNENGLGGTDVKLAVNAPLFVEHFQAIADLAKDGTFRYGGRTSEAKQLFMSGECGILTESSGGLGDIVKTGMNYGIGQLPYYEGHGPQNTIPGGASLWVFGGKSDAEYKGVAEFFHFLSQTKIQSRLHQVSGYMPVTIAAYEETKKSGFYDKNPARETPLLQMMGKPPTENSKGVRLVNLPQVRDIMNEEFEAMLAGKQDAKAALDKIVERGDAAIKQAAGN</sequence>
<feature type="signal peptide" evidence="2">
    <location>
        <begin position="1"/>
        <end position="26"/>
    </location>
</feature>
<feature type="chain" id="PRO_0000290124" description="sn-glycerol-3-phosphate-binding periplasmic protein UgpB">
    <location>
        <begin position="27"/>
        <end position="436"/>
    </location>
</feature>
<feature type="binding site" evidence="1">
    <location>
        <position position="68"/>
    </location>
    <ligand>
        <name>sn-glycerol 3-phosphate</name>
        <dbReference type="ChEBI" id="CHEBI:57597"/>
    </ligand>
</feature>
<feature type="binding site" evidence="1">
    <location>
        <position position="92"/>
    </location>
    <ligand>
        <name>sn-glycerol 3-phosphate</name>
        <dbReference type="ChEBI" id="CHEBI:57597"/>
    </ligand>
</feature>
<feature type="binding site" evidence="1">
    <location>
        <position position="147"/>
    </location>
    <ligand>
        <name>sn-glycerol 3-phosphate</name>
        <dbReference type="ChEBI" id="CHEBI:57597"/>
    </ligand>
</feature>
<feature type="binding site" evidence="1">
    <location>
        <position position="274"/>
    </location>
    <ligand>
        <name>sn-glycerol 3-phosphate</name>
        <dbReference type="ChEBI" id="CHEBI:57597"/>
    </ligand>
</feature>
<feature type="binding site" evidence="1">
    <location>
        <position position="308"/>
    </location>
    <ligand>
        <name>sn-glycerol 3-phosphate</name>
        <dbReference type="ChEBI" id="CHEBI:57597"/>
    </ligand>
</feature>
<feature type="binding site" evidence="1">
    <location>
        <position position="347"/>
    </location>
    <ligand>
        <name>sn-glycerol 3-phosphate</name>
        <dbReference type="ChEBI" id="CHEBI:57597"/>
    </ligand>
</feature>
<feature type="binding site" evidence="1">
    <location>
        <position position="398"/>
    </location>
    <ligand>
        <name>sn-glycerol 3-phosphate</name>
        <dbReference type="ChEBI" id="CHEBI:57597"/>
    </ligand>
</feature>
<keyword id="KW-0574">Periplasm</keyword>
<keyword id="KW-1185">Reference proteome</keyword>
<keyword id="KW-0732">Signal</keyword>
<keyword id="KW-0813">Transport</keyword>
<comment type="function">
    <text evidence="1">Part of the ABC transporter complex UgpBAEC involved in sn-glycerol-3-phosphate (G3P) import. Binds G3P.</text>
</comment>
<comment type="subunit">
    <text evidence="1">The complex is composed of two ATP-binding proteins (UgpC), two transmembrane proteins (UgpA and UgpE) and a solute-binding protein (UgpB).</text>
</comment>
<comment type="subcellular location">
    <subcellularLocation>
        <location evidence="1">Periplasm</location>
    </subcellularLocation>
</comment>
<comment type="similarity">
    <text evidence="3">Belongs to the bacterial solute-binding protein 1 family.</text>
</comment>
<comment type="sequence caution" evidence="3">
    <conflict type="erroneous initiation">
        <sequence resource="EMBL-CDS" id="AAK90201"/>
    </conflict>
</comment>
<gene>
    <name type="primary">ugpB</name>
    <name type="ordered locus">Atu3185</name>
    <name type="ORF">AGR_L_3248</name>
</gene>